<gene>
    <name type="primary">ipi1</name>
    <name type="ORF">AN8668</name>
</gene>
<protein>
    <recommendedName>
        <fullName>Pre-rRNA-processing protein ipi1</fullName>
    </recommendedName>
</protein>
<keyword id="KW-0539">Nucleus</keyword>
<keyword id="KW-1185">Reference proteome</keyword>
<keyword id="KW-0690">Ribosome biogenesis</keyword>
<keyword id="KW-0698">rRNA processing</keyword>
<proteinExistence type="inferred from homology"/>
<evidence type="ECO:0000250" key="1">
    <source>
        <dbReference type="UniProtKB" id="P38803"/>
    </source>
</evidence>
<evidence type="ECO:0000256" key="2">
    <source>
        <dbReference type="SAM" id="MobiDB-lite"/>
    </source>
</evidence>
<evidence type="ECO:0000305" key="3"/>
<dbReference type="EMBL" id="AACD01000158">
    <property type="protein sequence ID" value="EAA60702.1"/>
    <property type="molecule type" value="Genomic_DNA"/>
</dbReference>
<dbReference type="EMBL" id="BN001303">
    <property type="protein sequence ID" value="CBF78219.1"/>
    <property type="molecule type" value="Genomic_DNA"/>
</dbReference>
<dbReference type="RefSeq" id="XP_681937.1">
    <property type="nucleotide sequence ID" value="XM_676845.1"/>
</dbReference>
<dbReference type="SMR" id="Q5ASR2"/>
<dbReference type="FunCoup" id="Q5ASR2">
    <property type="interactions" value="215"/>
</dbReference>
<dbReference type="STRING" id="227321.Q5ASR2"/>
<dbReference type="EnsemblFungi" id="CBF78219">
    <property type="protein sequence ID" value="CBF78219"/>
    <property type="gene ID" value="ANIA_08668"/>
</dbReference>
<dbReference type="KEGG" id="ani:ANIA_08668"/>
<dbReference type="VEuPathDB" id="FungiDB:AN8668"/>
<dbReference type="eggNOG" id="KOG2149">
    <property type="taxonomic scope" value="Eukaryota"/>
</dbReference>
<dbReference type="HOGENOM" id="CLU_050252_2_0_1"/>
<dbReference type="InParanoid" id="Q5ASR2"/>
<dbReference type="OMA" id="CAGGWVK"/>
<dbReference type="OrthoDB" id="361362at2759"/>
<dbReference type="Proteomes" id="UP000000560">
    <property type="component" value="Chromosome III"/>
</dbReference>
<dbReference type="GO" id="GO:0005634">
    <property type="term" value="C:nucleus"/>
    <property type="evidence" value="ECO:0000318"/>
    <property type="project" value="GO_Central"/>
</dbReference>
<dbReference type="GO" id="GO:0120330">
    <property type="term" value="C:rixosome complex"/>
    <property type="evidence" value="ECO:0000318"/>
    <property type="project" value="GO_Central"/>
</dbReference>
<dbReference type="GO" id="GO:0006364">
    <property type="term" value="P:rRNA processing"/>
    <property type="evidence" value="ECO:0000318"/>
    <property type="project" value="GO_Central"/>
</dbReference>
<dbReference type="Gene3D" id="1.25.10.10">
    <property type="entry name" value="Leucine-rich Repeat Variant"/>
    <property type="match status" value="1"/>
</dbReference>
<dbReference type="InterPro" id="IPR011989">
    <property type="entry name" value="ARM-like"/>
</dbReference>
<dbReference type="InterPro" id="IPR016024">
    <property type="entry name" value="ARM-type_fold"/>
</dbReference>
<dbReference type="InterPro" id="IPR024679">
    <property type="entry name" value="Ipi1_N"/>
</dbReference>
<dbReference type="PANTHER" id="PTHR16056">
    <property type="entry name" value="REGULATOR OF MICROTUBULE DYNAMICS PROTEIN"/>
    <property type="match status" value="1"/>
</dbReference>
<dbReference type="PANTHER" id="PTHR16056:SF2">
    <property type="entry name" value="TESTIS-EXPRESSED PROTEIN 10"/>
    <property type="match status" value="1"/>
</dbReference>
<dbReference type="Pfam" id="PF12333">
    <property type="entry name" value="Ipi1_N"/>
    <property type="match status" value="1"/>
</dbReference>
<dbReference type="SUPFAM" id="SSF48371">
    <property type="entry name" value="ARM repeat"/>
    <property type="match status" value="1"/>
</dbReference>
<reference key="1">
    <citation type="journal article" date="2005" name="Nature">
        <title>Sequencing of Aspergillus nidulans and comparative analysis with A. fumigatus and A. oryzae.</title>
        <authorList>
            <person name="Galagan J.E."/>
            <person name="Calvo S.E."/>
            <person name="Cuomo C."/>
            <person name="Ma L.-J."/>
            <person name="Wortman J.R."/>
            <person name="Batzoglou S."/>
            <person name="Lee S.-I."/>
            <person name="Bastuerkmen M."/>
            <person name="Spevak C.C."/>
            <person name="Clutterbuck J."/>
            <person name="Kapitonov V."/>
            <person name="Jurka J."/>
            <person name="Scazzocchio C."/>
            <person name="Farman M.L."/>
            <person name="Butler J."/>
            <person name="Purcell S."/>
            <person name="Harris S."/>
            <person name="Braus G.H."/>
            <person name="Draht O."/>
            <person name="Busch S."/>
            <person name="D'Enfert C."/>
            <person name="Bouchier C."/>
            <person name="Goldman G.H."/>
            <person name="Bell-Pedersen D."/>
            <person name="Griffiths-Jones S."/>
            <person name="Doonan J.H."/>
            <person name="Yu J."/>
            <person name="Vienken K."/>
            <person name="Pain A."/>
            <person name="Freitag M."/>
            <person name="Selker E.U."/>
            <person name="Archer D.B."/>
            <person name="Penalva M.A."/>
            <person name="Oakley B.R."/>
            <person name="Momany M."/>
            <person name="Tanaka T."/>
            <person name="Kumagai T."/>
            <person name="Asai K."/>
            <person name="Machida M."/>
            <person name="Nierman W.C."/>
            <person name="Denning D.W."/>
            <person name="Caddick M.X."/>
            <person name="Hynes M."/>
            <person name="Paoletti M."/>
            <person name="Fischer R."/>
            <person name="Miller B.L."/>
            <person name="Dyer P.S."/>
            <person name="Sachs M.S."/>
            <person name="Osmani S.A."/>
            <person name="Birren B.W."/>
        </authorList>
    </citation>
    <scope>NUCLEOTIDE SEQUENCE [LARGE SCALE GENOMIC DNA]</scope>
    <source>
        <strain>FGSC A4 / ATCC 38163 / CBS 112.46 / NRRL 194 / M139</strain>
    </source>
</reference>
<reference key="2">
    <citation type="journal article" date="2009" name="Fungal Genet. Biol.">
        <title>The 2008 update of the Aspergillus nidulans genome annotation: a community effort.</title>
        <authorList>
            <person name="Wortman J.R."/>
            <person name="Gilsenan J.M."/>
            <person name="Joardar V."/>
            <person name="Deegan J."/>
            <person name="Clutterbuck J."/>
            <person name="Andersen M.R."/>
            <person name="Archer D."/>
            <person name="Bencina M."/>
            <person name="Braus G."/>
            <person name="Coutinho P."/>
            <person name="von Dohren H."/>
            <person name="Doonan J."/>
            <person name="Driessen A.J."/>
            <person name="Durek P."/>
            <person name="Espeso E."/>
            <person name="Fekete E."/>
            <person name="Flipphi M."/>
            <person name="Estrada C.G."/>
            <person name="Geysens S."/>
            <person name="Goldman G."/>
            <person name="de Groot P.W."/>
            <person name="Hansen K."/>
            <person name="Harris S.D."/>
            <person name="Heinekamp T."/>
            <person name="Helmstaedt K."/>
            <person name="Henrissat B."/>
            <person name="Hofmann G."/>
            <person name="Homan T."/>
            <person name="Horio T."/>
            <person name="Horiuchi H."/>
            <person name="James S."/>
            <person name="Jones M."/>
            <person name="Karaffa L."/>
            <person name="Karanyi Z."/>
            <person name="Kato M."/>
            <person name="Keller N."/>
            <person name="Kelly D.E."/>
            <person name="Kiel J.A."/>
            <person name="Kim J.M."/>
            <person name="van der Klei I.J."/>
            <person name="Klis F.M."/>
            <person name="Kovalchuk A."/>
            <person name="Krasevec N."/>
            <person name="Kubicek C.P."/>
            <person name="Liu B."/>
            <person name="Maccabe A."/>
            <person name="Meyer V."/>
            <person name="Mirabito P."/>
            <person name="Miskei M."/>
            <person name="Mos M."/>
            <person name="Mullins J."/>
            <person name="Nelson D.R."/>
            <person name="Nielsen J."/>
            <person name="Oakley B.R."/>
            <person name="Osmani S.A."/>
            <person name="Pakula T."/>
            <person name="Paszewski A."/>
            <person name="Paulsen I."/>
            <person name="Pilsyk S."/>
            <person name="Pocsi I."/>
            <person name="Punt P.J."/>
            <person name="Ram A.F."/>
            <person name="Ren Q."/>
            <person name="Robellet X."/>
            <person name="Robson G."/>
            <person name="Seiboth B."/>
            <person name="van Solingen P."/>
            <person name="Specht T."/>
            <person name="Sun J."/>
            <person name="Taheri-Talesh N."/>
            <person name="Takeshita N."/>
            <person name="Ussery D."/>
            <person name="vanKuyk P.A."/>
            <person name="Visser H."/>
            <person name="van de Vondervoort P.J."/>
            <person name="de Vries R.P."/>
            <person name="Walton J."/>
            <person name="Xiang X."/>
            <person name="Xiong Y."/>
            <person name="Zeng A.P."/>
            <person name="Brandt B.W."/>
            <person name="Cornell M.J."/>
            <person name="van den Hondel C.A."/>
            <person name="Visser J."/>
            <person name="Oliver S.G."/>
            <person name="Turner G."/>
        </authorList>
    </citation>
    <scope>GENOME REANNOTATION</scope>
    <source>
        <strain>FGSC A4 / ATCC 38163 / CBS 112.46 / NRRL 194 / M139</strain>
    </source>
</reference>
<sequence length="375" mass="40062">MGASTKRKKEKQKDFQKPKLKVGKAKAKPDNFTDTSFKSKAITLNQQSLTLTAPSANTQFSHHLSLLSSKSDSQRRDSLAHLTTTLTSQPTHLPPPQPVSVILPSLLPLILDSNASVRANLLKLLRALPQHDVKDHVGTLMPYIRAGMTHLAAEVRVSSVEVLGWLVSIAGDEVVGVAGGWVKTLNCFLSVLGWHVAAKSKWTSLATSTSTSASGSGNGTGSSTSGKASYGKAGAKGRPQVRFLTILADFLDAGIGSSGSQSMDTTADSASESENQYCTFPITTFASHLIPSNFASPYLTLNLFGTPRDEEGEMYETREDRWRVFVARGFLGAVERGLETARGEGGEVGRVSALAAKVLRNARDDLEGDGFGDEL</sequence>
<organism>
    <name type="scientific">Emericella nidulans (strain FGSC A4 / ATCC 38163 / CBS 112.46 / NRRL 194 / M139)</name>
    <name type="common">Aspergillus nidulans</name>
    <dbReference type="NCBI Taxonomy" id="227321"/>
    <lineage>
        <taxon>Eukaryota</taxon>
        <taxon>Fungi</taxon>
        <taxon>Dikarya</taxon>
        <taxon>Ascomycota</taxon>
        <taxon>Pezizomycotina</taxon>
        <taxon>Eurotiomycetes</taxon>
        <taxon>Eurotiomycetidae</taxon>
        <taxon>Eurotiales</taxon>
        <taxon>Aspergillaceae</taxon>
        <taxon>Aspergillus</taxon>
        <taxon>Aspergillus subgen. Nidulantes</taxon>
    </lineage>
</organism>
<feature type="chain" id="PRO_0000308720" description="Pre-rRNA-processing protein ipi1">
    <location>
        <begin position="1"/>
        <end position="375"/>
    </location>
</feature>
<feature type="region of interest" description="Disordered" evidence="2">
    <location>
        <begin position="1"/>
        <end position="35"/>
    </location>
</feature>
<feature type="region of interest" description="Disordered" evidence="2">
    <location>
        <begin position="208"/>
        <end position="234"/>
    </location>
</feature>
<feature type="compositionally biased region" description="Basic residues" evidence="2">
    <location>
        <begin position="1"/>
        <end position="10"/>
    </location>
</feature>
<comment type="function">
    <text evidence="1">Component of the RIX1 complex required for processing of ITS2 sequences from 35S pre-rRNA.</text>
</comment>
<comment type="subunit">
    <text evidence="1">Component of the RIX1 complex, composed of ipi1, rix1/ipi2 and ipi3 in a 1:2:2 stoichiometry. The complex interacts (via rix1) with mdn1 (via its hexameric AAA ATPase ring) and the pre-60S ribosome particles.</text>
</comment>
<comment type="subcellular location">
    <subcellularLocation>
        <location evidence="1">Nucleus</location>
    </subcellularLocation>
</comment>
<comment type="similarity">
    <text evidence="3">Belongs to the IPI1/TEX10 family.</text>
</comment>
<name>IPI1_EMENI</name>
<accession>Q5ASR2</accession>
<accession>C8VA53</accession>